<sequence>MRYVVSPQLVLYVEKGQKIKRVLYLTPYGVLDDKSPIYYFLSTHLKITDPEIHRRHILLTLKISQLKGYLCNLLDIRNDIIIYSHKNNLEYSYVDNTIFNPFVHTQKKTLIKSDGFLYNIYPGACDFLVIWVANADDTSIAEFGSYEDVDVNILKFETRLLEVFDNLDLDMNIESKFNNIFRTNLKFTGLRKLIKKINELNGLYYKSLLYKSDEYFINLTGNKFILTDERLNLTVWDPDGVVTFSSDGDTITINNVKLFTSLLTDIDLQMERIKGDVTYKIFLSTPITSRIKLNIETSFIFVETATNNILLSADKRISIILAKNHISIKVKNYIPNIEKYFTFLVIAINSMFNNIQQASDFTKIETVYWSRICQNTKNKHRKPVIVSSLDDNMEKVSDNFYKSSTKEVFINSSGIMFSCLDPLNKYNYVGFLSIFYRLQKMCIPCCFLKNQSHTETFSSCVHQKEITSDVINPYILNFGKVVTKSKISFLPIIFDSFFNKGVKIIFEQDNKRLKETIGYHVVKSCDEDIKRLRTISDIIMFVNEDKNILIAEDIIYFPMNYADIGTRVYILIQEIVHEVIVVKKHMTKDLIEVCPPNYKLVKNLFPRQTKFATIRSDSGMELTTDGFLVDGKEFNVDLSSNYVAFTKNITTPYTLSKYFAPLFKYVITESKNRFMKTWLINTMLRLGIDLDLDTNILPKLEKYYPNHGKSV</sequence>
<organismHost>
    <name type="scientific">Oryctolagus cuniculus</name>
    <name type="common">Rabbit</name>
    <dbReference type="NCBI Taxonomy" id="9986"/>
</organismHost>
<protein>
    <recommendedName>
        <fullName>Early transcription factor 82 kDa subunit</fullName>
    </recommendedName>
    <alternativeName>
        <fullName>ETF large subunit</fullName>
    </alternativeName>
</protein>
<comment type="function">
    <text evidence="1">Acts with RNA polymerase to initiate transcription from early gene promoters. Is recruited by the RPO-associated protein of 94 kDa (RAP94) to form the early transcription complex, which also contains the core RNA polymerase. ETF heterodimer binds to early gene promoters (By similarity).</text>
</comment>
<comment type="subunit">
    <text evidence="1">Heterodimer of a 70 kDa and a 82 kDa subunit. Part of the early transcription complex composed of ETF, RAP94, and the DNA-directed RNA polymerase (By similarity).</text>
</comment>
<comment type="similarity">
    <text evidence="2">Belongs to the poxviridae VETF large subunit family.</text>
</comment>
<reference key="1">
    <citation type="journal article" date="1999" name="Virology">
        <title>The complete genome sequence of shope (Rabbit) fibroma virus.</title>
        <authorList>
            <person name="Willer D.O."/>
            <person name="McFadden G."/>
            <person name="Evans D.H."/>
        </authorList>
    </citation>
    <scope>NUCLEOTIDE SEQUENCE [LARGE SCALE GENOMIC DNA]</scope>
</reference>
<keyword id="KW-0010">Activator</keyword>
<keyword id="KW-0238">DNA-binding</keyword>
<keyword id="KW-1185">Reference proteome</keyword>
<keyword id="KW-0804">Transcription</keyword>
<keyword id="KW-0805">Transcription regulation</keyword>
<proteinExistence type="inferred from homology"/>
<feature type="chain" id="PRO_0000099088" description="Early transcription factor 82 kDa subunit">
    <location>
        <begin position="1"/>
        <end position="711"/>
    </location>
</feature>
<name>ETF2_RFVKA</name>
<accession>Q9Q8Y2</accession>
<dbReference type="EMBL" id="AF170722">
    <property type="protein sequence ID" value="AAF17979.1"/>
    <property type="molecule type" value="Genomic_DNA"/>
</dbReference>
<dbReference type="RefSeq" id="NP_051985.1">
    <property type="nucleotide sequence ID" value="NC_001266.1"/>
</dbReference>
<dbReference type="SMR" id="Q9Q8Y2"/>
<dbReference type="KEGG" id="vg:1486940"/>
<dbReference type="Proteomes" id="UP000000868">
    <property type="component" value="Segment"/>
</dbReference>
<dbReference type="GO" id="GO:0003677">
    <property type="term" value="F:DNA binding"/>
    <property type="evidence" value="ECO:0007669"/>
    <property type="project" value="UniProtKB-KW"/>
</dbReference>
<dbReference type="GO" id="GO:0045893">
    <property type="term" value="P:positive regulation of DNA-templated transcription"/>
    <property type="evidence" value="ECO:0007669"/>
    <property type="project" value="InterPro"/>
</dbReference>
<dbReference type="InterPro" id="IPR007532">
    <property type="entry name" value="Poxvirus_early-TF_lsu"/>
</dbReference>
<dbReference type="Pfam" id="PF04441">
    <property type="entry name" value="Pox_VERT_large"/>
    <property type="match status" value="1"/>
</dbReference>
<organism>
    <name type="scientific">Rabbit fibroma virus (strain Kasza)</name>
    <name type="common">RFV</name>
    <name type="synonym">Shope fibroma virus (strain Kasza)</name>
    <dbReference type="NCBI Taxonomy" id="10272"/>
    <lineage>
        <taxon>Viruses</taxon>
        <taxon>Varidnaviria</taxon>
        <taxon>Bamfordvirae</taxon>
        <taxon>Nucleocytoviricota</taxon>
        <taxon>Pokkesviricetes</taxon>
        <taxon>Chitovirales</taxon>
        <taxon>Poxviridae</taxon>
        <taxon>Chordopoxvirinae</taxon>
        <taxon>Leporipoxvirus</taxon>
        <taxon>Rabbit fibroma virus</taxon>
    </lineage>
</organism>
<gene>
    <name type="primary">VETFL</name>
    <name type="ordered locus">s096L</name>
</gene>
<evidence type="ECO:0000250" key="1"/>
<evidence type="ECO:0000305" key="2"/>